<keyword id="KW-0131">Cell cycle</keyword>
<keyword id="KW-0132">Cell division</keyword>
<keyword id="KW-1185">Reference proteome</keyword>
<sequence>MSYKNIYYSDKYTDEHFEYRHVMLPKELAKQVPKTHLMSEEEWRRLGVQQSLGWVHYMIHEPEPHILLFRRPLPKDQQK</sequence>
<comment type="function">
    <text>Binds to the catalytic subunit of the cyclin dependent kinases and is essential for their biological function.</text>
</comment>
<comment type="subunit">
    <text evidence="1">Forms a homohexamer that can probably bind six kinase subunits.</text>
</comment>
<comment type="similarity">
    <text evidence="2">Belongs to the CKS family.</text>
</comment>
<organism>
    <name type="scientific">Xenopus laevis</name>
    <name type="common">African clawed frog</name>
    <dbReference type="NCBI Taxonomy" id="8355"/>
    <lineage>
        <taxon>Eukaryota</taxon>
        <taxon>Metazoa</taxon>
        <taxon>Chordata</taxon>
        <taxon>Craniata</taxon>
        <taxon>Vertebrata</taxon>
        <taxon>Euteleostomi</taxon>
        <taxon>Amphibia</taxon>
        <taxon>Batrachia</taxon>
        <taxon>Anura</taxon>
        <taxon>Pipoidea</taxon>
        <taxon>Pipidae</taxon>
        <taxon>Xenopodinae</taxon>
        <taxon>Xenopus</taxon>
        <taxon>Xenopus</taxon>
    </lineage>
</organism>
<proteinExistence type="inferred from homology"/>
<reference key="1">
    <citation type="journal article" date="1996" name="Genes Dev.">
        <title>Xe-p9, a Xenopus Suc1/Cks homolog, has multiple essential roles in cell cycle control.</title>
        <authorList>
            <person name="Patra D."/>
            <person name="Dunphy W.G."/>
        </authorList>
    </citation>
    <scope>NUCLEOTIDE SEQUENCE [MRNA]</scope>
</reference>
<reference key="2">
    <citation type="submission" date="2004-04" db="EMBL/GenBank/DDBJ databases">
        <authorList>
            <consortium name="NIH - Xenopus Gene Collection (XGC) project"/>
        </authorList>
    </citation>
    <scope>NUCLEOTIDE SEQUENCE [LARGE SCALE MRNA]</scope>
    <source>
        <tissue>Ovary</tissue>
    </source>
</reference>
<protein>
    <recommendedName>
        <fullName>Cyclin-dependent kinases regulatory subunit 2</fullName>
    </recommendedName>
    <alternativeName>
        <fullName>Xe-p9</fullName>
    </alternativeName>
</protein>
<feature type="chain" id="PRO_0000206239" description="Cyclin-dependent kinases regulatory subunit 2">
    <location>
        <begin position="1"/>
        <end position="79"/>
    </location>
</feature>
<evidence type="ECO:0000250" key="1"/>
<evidence type="ECO:0000305" key="2"/>
<name>CKS2_XENLA</name>
<dbReference type="EMBL" id="U56426">
    <property type="protein sequence ID" value="AAC59914.1"/>
    <property type="molecule type" value="mRNA"/>
</dbReference>
<dbReference type="EMBL" id="BC068722">
    <property type="protein sequence ID" value="AAH68722.1"/>
    <property type="molecule type" value="mRNA"/>
</dbReference>
<dbReference type="RefSeq" id="NP_001081798.1">
    <property type="nucleotide sequence ID" value="NM_001088329.1"/>
</dbReference>
<dbReference type="SMR" id="Q91879"/>
<dbReference type="DNASU" id="398059"/>
<dbReference type="GeneID" id="398059"/>
<dbReference type="KEGG" id="xla:398059"/>
<dbReference type="AGR" id="Xenbase:XB-GENE-17345494"/>
<dbReference type="CTD" id="398059"/>
<dbReference type="Xenbase" id="XB-GENE-17345494">
    <property type="gene designation" value="cks2.S"/>
</dbReference>
<dbReference type="OMA" id="AHYETHR"/>
<dbReference type="OrthoDB" id="440676at2759"/>
<dbReference type="Proteomes" id="UP000186698">
    <property type="component" value="Chromosome 1S"/>
</dbReference>
<dbReference type="Bgee" id="398059">
    <property type="expression patterns" value="Expressed in egg cell and 17 other cell types or tissues"/>
</dbReference>
<dbReference type="GO" id="GO:0000307">
    <property type="term" value="C:cyclin-dependent protein kinase holoenzyme complex"/>
    <property type="evidence" value="ECO:0000318"/>
    <property type="project" value="GO_Central"/>
</dbReference>
<dbReference type="GO" id="GO:0019005">
    <property type="term" value="C:SCF ubiquitin ligase complex"/>
    <property type="evidence" value="ECO:0000318"/>
    <property type="project" value="GO_Central"/>
</dbReference>
<dbReference type="GO" id="GO:0061575">
    <property type="term" value="F:cyclin-dependent protein serine/threonine kinase activator activity"/>
    <property type="evidence" value="ECO:0000318"/>
    <property type="project" value="GO_Central"/>
</dbReference>
<dbReference type="GO" id="GO:0042393">
    <property type="term" value="F:histone binding"/>
    <property type="evidence" value="ECO:0000318"/>
    <property type="project" value="GO_Central"/>
</dbReference>
<dbReference type="GO" id="GO:0019901">
    <property type="term" value="F:protein kinase binding"/>
    <property type="evidence" value="ECO:0000318"/>
    <property type="project" value="GO_Central"/>
</dbReference>
<dbReference type="GO" id="GO:0043130">
    <property type="term" value="F:ubiquitin binding"/>
    <property type="evidence" value="ECO:0000318"/>
    <property type="project" value="GO_Central"/>
</dbReference>
<dbReference type="GO" id="GO:0051301">
    <property type="term" value="P:cell division"/>
    <property type="evidence" value="ECO:0007669"/>
    <property type="project" value="UniProtKB-KW"/>
</dbReference>
<dbReference type="GO" id="GO:0007346">
    <property type="term" value="P:regulation of mitotic cell cycle"/>
    <property type="evidence" value="ECO:0000318"/>
    <property type="project" value="GO_Central"/>
</dbReference>
<dbReference type="FunFam" id="3.30.170.10:FF:000001">
    <property type="entry name" value="Cyclin-dependent kinases regulatory subunit"/>
    <property type="match status" value="1"/>
</dbReference>
<dbReference type="Gene3D" id="3.30.170.10">
    <property type="entry name" value="Cyclin-dependent kinase, regulatory subunit"/>
    <property type="match status" value="1"/>
</dbReference>
<dbReference type="InterPro" id="IPR000789">
    <property type="entry name" value="Cyclin-dep_kinase_reg-sub"/>
</dbReference>
<dbReference type="InterPro" id="IPR036858">
    <property type="entry name" value="Cyclin-dep_kinase_reg-sub_sf"/>
</dbReference>
<dbReference type="PANTHER" id="PTHR23415">
    <property type="entry name" value="CYCLIN-DEPENDENT KINASES REGULATORY SUBUNIT/60S RIBOSOME SUBUNIT BIOGENESIS PROTEIN NIP7"/>
    <property type="match status" value="1"/>
</dbReference>
<dbReference type="Pfam" id="PF01111">
    <property type="entry name" value="CKS"/>
    <property type="match status" value="1"/>
</dbReference>
<dbReference type="PRINTS" id="PR00296">
    <property type="entry name" value="CYCLINKINASE"/>
</dbReference>
<dbReference type="SMART" id="SM01084">
    <property type="entry name" value="CKS"/>
    <property type="match status" value="1"/>
</dbReference>
<dbReference type="SUPFAM" id="SSF55637">
    <property type="entry name" value="Cell cycle regulatory proteins"/>
    <property type="match status" value="1"/>
</dbReference>
<dbReference type="PROSITE" id="PS00944">
    <property type="entry name" value="CKS_1"/>
    <property type="match status" value="1"/>
</dbReference>
<dbReference type="PROSITE" id="PS00945">
    <property type="entry name" value="CKS_2"/>
    <property type="match status" value="1"/>
</dbReference>
<gene>
    <name type="primary">cks2</name>
</gene>
<accession>Q91879</accession>
<accession>Q5D029</accession>